<dbReference type="EC" id="2.7.1.134" evidence="2"/>
<dbReference type="EC" id="2.7.1.159" evidence="2"/>
<dbReference type="EMBL" id="BC054977">
    <property type="protein sequence ID" value="AAH54977.1"/>
    <property type="molecule type" value="mRNA"/>
</dbReference>
<dbReference type="RefSeq" id="NP_001080136.1">
    <property type="nucleotide sequence ID" value="NM_001086667.1"/>
</dbReference>
<dbReference type="RefSeq" id="XP_018084114.1">
    <property type="nucleotide sequence ID" value="XM_018228625.1"/>
</dbReference>
<dbReference type="SMR" id="Q7SY78"/>
<dbReference type="DNASU" id="379828"/>
<dbReference type="GeneID" id="379828"/>
<dbReference type="KEGG" id="xla:379828"/>
<dbReference type="AGR" id="Xenbase:XB-GENE-950622"/>
<dbReference type="CTD" id="379828"/>
<dbReference type="Xenbase" id="XB-GENE-950622">
    <property type="gene designation" value="itpk1.L"/>
</dbReference>
<dbReference type="OMA" id="QHLYNRQ"/>
<dbReference type="OrthoDB" id="25308at2759"/>
<dbReference type="Proteomes" id="UP000186698">
    <property type="component" value="Chromosome 8L"/>
</dbReference>
<dbReference type="Bgee" id="379828">
    <property type="expression patterns" value="Expressed in spleen and 19 other cell types or tissues"/>
</dbReference>
<dbReference type="GO" id="GO:0005737">
    <property type="term" value="C:cytoplasm"/>
    <property type="evidence" value="ECO:0007669"/>
    <property type="project" value="TreeGrafter"/>
</dbReference>
<dbReference type="GO" id="GO:0005524">
    <property type="term" value="F:ATP binding"/>
    <property type="evidence" value="ECO:0007669"/>
    <property type="project" value="UniProtKB-KW"/>
</dbReference>
<dbReference type="GO" id="GO:0000825">
    <property type="term" value="F:inositol-1,3,4,5-tetrakisphosphate 6-kinase activity"/>
    <property type="evidence" value="ECO:0000250"/>
    <property type="project" value="UniProtKB"/>
</dbReference>
<dbReference type="GO" id="GO:0052726">
    <property type="term" value="F:inositol-1,3,4-trisphosphate 5-kinase activity"/>
    <property type="evidence" value="ECO:0000318"/>
    <property type="project" value="GO_Central"/>
</dbReference>
<dbReference type="GO" id="GO:0052725">
    <property type="term" value="F:inositol-1,3,4-trisphosphate 6-kinase activity"/>
    <property type="evidence" value="ECO:0000318"/>
    <property type="project" value="GO_Central"/>
</dbReference>
<dbReference type="GO" id="GO:0047325">
    <property type="term" value="F:inositol-3,4,5,6-tetrakisphosphate 1-kinase activity"/>
    <property type="evidence" value="ECO:0000318"/>
    <property type="project" value="GO_Central"/>
</dbReference>
<dbReference type="GO" id="GO:0052835">
    <property type="term" value="F:inositol-3,4,6-trisphosphate 1-kinase activity"/>
    <property type="evidence" value="ECO:0007669"/>
    <property type="project" value="RHEA"/>
</dbReference>
<dbReference type="GO" id="GO:0016853">
    <property type="term" value="F:isomerase activity"/>
    <property type="evidence" value="ECO:0007669"/>
    <property type="project" value="UniProtKB-KW"/>
</dbReference>
<dbReference type="GO" id="GO:0000287">
    <property type="term" value="F:magnesium ion binding"/>
    <property type="evidence" value="ECO:0007669"/>
    <property type="project" value="InterPro"/>
</dbReference>
<dbReference type="GO" id="GO:0032957">
    <property type="term" value="P:inositol trisphosphate metabolic process"/>
    <property type="evidence" value="ECO:0007669"/>
    <property type="project" value="InterPro"/>
</dbReference>
<dbReference type="GO" id="GO:0070266">
    <property type="term" value="P:necroptotic process"/>
    <property type="evidence" value="ECO:0000250"/>
    <property type="project" value="UniProtKB"/>
</dbReference>
<dbReference type="FunFam" id="3.30.1490.220:FF:000001">
    <property type="entry name" value="Inositol-tetrakisphosphate 1-kinase"/>
    <property type="match status" value="1"/>
</dbReference>
<dbReference type="FunFam" id="3.40.50.11370:FF:000001">
    <property type="entry name" value="Inositol-tetrakisphosphate 1-kinase"/>
    <property type="match status" value="1"/>
</dbReference>
<dbReference type="FunFam" id="3.30.470.20:FF:000047">
    <property type="entry name" value="Inositol-tetrakisphosphate 1-kinase 4"/>
    <property type="match status" value="1"/>
</dbReference>
<dbReference type="Gene3D" id="3.30.1490.220">
    <property type="match status" value="1"/>
</dbReference>
<dbReference type="Gene3D" id="3.40.50.11370">
    <property type="match status" value="1"/>
</dbReference>
<dbReference type="Gene3D" id="3.30.470.20">
    <property type="entry name" value="ATP-grasp fold, B domain"/>
    <property type="match status" value="1"/>
</dbReference>
<dbReference type="InterPro" id="IPR011761">
    <property type="entry name" value="ATP-grasp"/>
</dbReference>
<dbReference type="InterPro" id="IPR008656">
    <property type="entry name" value="Inositol_tetrakis-P_1-kinase"/>
</dbReference>
<dbReference type="InterPro" id="IPR040464">
    <property type="entry name" value="InsP(3)kin_ATP-grasp"/>
</dbReference>
<dbReference type="InterPro" id="IPR041429">
    <property type="entry name" value="ITPK1_N"/>
</dbReference>
<dbReference type="PANTHER" id="PTHR14217">
    <property type="entry name" value="INOSITOL-TETRAKISPHOSPHATE 1-KINASE"/>
    <property type="match status" value="1"/>
</dbReference>
<dbReference type="PANTHER" id="PTHR14217:SF41">
    <property type="entry name" value="INOSITOL-TETRAKISPHOSPHATE 1-KINASE"/>
    <property type="match status" value="1"/>
</dbReference>
<dbReference type="Pfam" id="PF05770">
    <property type="entry name" value="Ins134_P3_kin"/>
    <property type="match status" value="1"/>
</dbReference>
<dbReference type="Pfam" id="PF17927">
    <property type="entry name" value="Ins134_P3_kin_N"/>
    <property type="match status" value="1"/>
</dbReference>
<dbReference type="PIRSF" id="PIRSF038186">
    <property type="entry name" value="ITPK"/>
    <property type="match status" value="1"/>
</dbReference>
<dbReference type="SUPFAM" id="SSF56059">
    <property type="entry name" value="Glutathione synthetase ATP-binding domain-like"/>
    <property type="match status" value="1"/>
</dbReference>
<keyword id="KW-0067">ATP-binding</keyword>
<keyword id="KW-0413">Isomerase</keyword>
<keyword id="KW-0418">Kinase</keyword>
<keyword id="KW-0460">Magnesium</keyword>
<keyword id="KW-0479">Metal-binding</keyword>
<keyword id="KW-0547">Nucleotide-binding</keyword>
<keyword id="KW-1185">Reference proteome</keyword>
<keyword id="KW-0808">Transferase</keyword>
<comment type="function">
    <text evidence="2">Kinase that can phosphorylate various inositol polyphosphate such as Ins(3,4,5,6)P4 or Ins(1,3,4)P3. Phosphorylates Ins(3,4,5,6)P4 at position 1 to form Ins(1,3,4,5,6)P5. This reaction is thought to have regulatory importance, since Ins(3,4,5,6)P4 is an inhibitor of plasma membrane Ca(2+)-activated Cl(-) channels, while Ins(1,3,4,5,6)P5 is not. Also phosphorylates Ins(1,3,4)P3 on O-5 and O-6 to form Ins(1,3,4,6)P4, an essential molecule in the hexakisphosphate (InsP6) pathway. Also acts as an inositol polyphosphate phosphatase that dephosphorylates Ins(1,3,4,5)P4 and Ins(1,3,4,6)P4 to Ins(1,3,4)P3, and Ins(1,3,4,5,6)P5 to Ins(3,4,5,6)P4. May also act as an isomerase that interconverts the inositol tetrakisphosphate isomers Ins(1,3,4,5)P4 and Ins(1,3,4,6)P4 in the presence of ADP and magnesium. Probably acts as the rate-limiting enzyme of the InsP6 pathway. Modifies TNF-alpha-induced apoptosis by interfering with the activation of TNFRSF1A-associated death domain. Plays an important role in MLKL-mediated necroptosis. Produces highly phosphorylated inositol phosphates such as inositolhexakisphosphate (InsP6) which bind to MLKL mediating the release of an N-terminal auto-inhibitory region leading to its activation. Essential for activated phospho-MLKL to oligomerize and localize to the cell membrane during necroptosis.</text>
</comment>
<comment type="catalytic activity">
    <reaction evidence="2">
        <text>1D-myo-inositol 3,4,5,6-tetrakisphosphate + ATP = 1D-myo-inositol 1,3,4,5,6-pentakisphosphate + ADP + H(+)</text>
        <dbReference type="Rhea" id="RHEA:12452"/>
        <dbReference type="ChEBI" id="CHEBI:15378"/>
        <dbReference type="ChEBI" id="CHEBI:30616"/>
        <dbReference type="ChEBI" id="CHEBI:57539"/>
        <dbReference type="ChEBI" id="CHEBI:57733"/>
        <dbReference type="ChEBI" id="CHEBI:456216"/>
        <dbReference type="EC" id="2.7.1.134"/>
    </reaction>
    <physiologicalReaction direction="left-to-right" evidence="2">
        <dbReference type="Rhea" id="RHEA:12453"/>
    </physiologicalReaction>
    <physiologicalReaction direction="right-to-left" evidence="2">
        <dbReference type="Rhea" id="RHEA:12454"/>
    </physiologicalReaction>
</comment>
<comment type="catalytic activity">
    <reaction evidence="2">
        <text>1D-myo-inositol 1,3,4-trisphosphate + ATP = 1D-myo-inositol 1,3,4,5-tetrakisphosphate + ADP + H(+)</text>
        <dbReference type="Rhea" id="RHEA:13253"/>
        <dbReference type="ChEBI" id="CHEBI:15378"/>
        <dbReference type="ChEBI" id="CHEBI:30616"/>
        <dbReference type="ChEBI" id="CHEBI:57895"/>
        <dbReference type="ChEBI" id="CHEBI:58414"/>
        <dbReference type="ChEBI" id="CHEBI:456216"/>
        <dbReference type="EC" id="2.7.1.159"/>
    </reaction>
    <physiologicalReaction direction="left-to-right" evidence="2">
        <dbReference type="Rhea" id="RHEA:13254"/>
    </physiologicalReaction>
    <physiologicalReaction direction="right-to-left" evidence="2">
        <dbReference type="Rhea" id="RHEA:13255"/>
    </physiologicalReaction>
</comment>
<comment type="catalytic activity">
    <reaction evidence="2">
        <text>1D-myo-inositol 1,3,4-trisphosphate + ATP = 1D-myo-inositol 1,3,4,6-tetrakisphosphate + ADP + H(+)</text>
        <dbReference type="Rhea" id="RHEA:20940"/>
        <dbReference type="ChEBI" id="CHEBI:15378"/>
        <dbReference type="ChEBI" id="CHEBI:30616"/>
        <dbReference type="ChEBI" id="CHEBI:57660"/>
        <dbReference type="ChEBI" id="CHEBI:58414"/>
        <dbReference type="ChEBI" id="CHEBI:456216"/>
        <dbReference type="EC" id="2.7.1.159"/>
    </reaction>
    <physiologicalReaction direction="left-to-right" evidence="2">
        <dbReference type="Rhea" id="RHEA:20941"/>
    </physiologicalReaction>
    <physiologicalReaction direction="right-to-left" evidence="2">
        <dbReference type="Rhea" id="RHEA:20942"/>
    </physiologicalReaction>
</comment>
<comment type="catalytic activity">
    <reaction evidence="2">
        <text>1D-myo-inositol 3,4,6-trisphosphate + ATP = 1D-myo-inositol 1,3,4,6-tetrakisphosphate + ADP + H(+)</text>
        <dbReference type="Rhea" id="RHEA:70287"/>
        <dbReference type="ChEBI" id="CHEBI:15378"/>
        <dbReference type="ChEBI" id="CHEBI:30616"/>
        <dbReference type="ChEBI" id="CHEBI:57660"/>
        <dbReference type="ChEBI" id="CHEBI:189099"/>
        <dbReference type="ChEBI" id="CHEBI:456216"/>
    </reaction>
    <physiologicalReaction direction="left-to-right" evidence="2">
        <dbReference type="Rhea" id="RHEA:70288"/>
    </physiologicalReaction>
    <physiologicalReaction direction="right-to-left" evidence="2">
        <dbReference type="Rhea" id="RHEA:70289"/>
    </physiologicalReaction>
</comment>
<comment type="catalytic activity">
    <reaction evidence="2">
        <text>1D-myo-inositol 1,3,4-trisphosphate + 1D-myo-inositol 1,3,4,5,6-pentakisphosphate = 1D-myo-inositol 3,4,5,6-tetrakisphosphate + 1D-myo-inositol 1,3,4,6-tetrakisphosphate</text>
        <dbReference type="Rhea" id="RHEA:70263"/>
        <dbReference type="ChEBI" id="CHEBI:57539"/>
        <dbReference type="ChEBI" id="CHEBI:57660"/>
        <dbReference type="ChEBI" id="CHEBI:57733"/>
        <dbReference type="ChEBI" id="CHEBI:58414"/>
    </reaction>
    <physiologicalReaction direction="left-to-right" evidence="2">
        <dbReference type="Rhea" id="RHEA:70264"/>
    </physiologicalReaction>
    <physiologicalReaction direction="right-to-left" evidence="2">
        <dbReference type="Rhea" id="RHEA:70265"/>
    </physiologicalReaction>
</comment>
<comment type="catalytic activity">
    <reaction evidence="2">
        <text>1D-myo-inositol 1,3,4-trisphosphate + 1D-myo-inositol 1,3,4,5,6-pentakisphosphate = 1D-myo-inositol 3,4,5,6-tetrakisphosphate + 1D-myo-inositol 1,3,4,5-tetrakisphosphate</text>
        <dbReference type="Rhea" id="RHEA:70271"/>
        <dbReference type="ChEBI" id="CHEBI:57539"/>
        <dbReference type="ChEBI" id="CHEBI:57733"/>
        <dbReference type="ChEBI" id="CHEBI:57895"/>
        <dbReference type="ChEBI" id="CHEBI:58414"/>
    </reaction>
    <physiologicalReaction direction="left-to-right" evidence="2">
        <dbReference type="Rhea" id="RHEA:70272"/>
    </physiologicalReaction>
    <physiologicalReaction direction="right-to-left" evidence="2">
        <dbReference type="Rhea" id="RHEA:70273"/>
    </physiologicalReaction>
</comment>
<comment type="cofactor">
    <cofactor evidence="2">
        <name>Mg(2+)</name>
        <dbReference type="ChEBI" id="CHEBI:18420"/>
    </cofactor>
    <text evidence="2">Binds 2 magnesium ions per subunit.</text>
</comment>
<comment type="subunit">
    <text evidence="1">Monomer.</text>
</comment>
<comment type="similarity">
    <text evidence="3">Belongs to the ITPK1 family.</text>
</comment>
<organism>
    <name type="scientific">Xenopus laevis</name>
    <name type="common">African clawed frog</name>
    <dbReference type="NCBI Taxonomy" id="8355"/>
    <lineage>
        <taxon>Eukaryota</taxon>
        <taxon>Metazoa</taxon>
        <taxon>Chordata</taxon>
        <taxon>Craniata</taxon>
        <taxon>Vertebrata</taxon>
        <taxon>Euteleostomi</taxon>
        <taxon>Amphibia</taxon>
        <taxon>Batrachia</taxon>
        <taxon>Anura</taxon>
        <taxon>Pipoidea</taxon>
        <taxon>Pipidae</taxon>
        <taxon>Xenopodinae</taxon>
        <taxon>Xenopus</taxon>
        <taxon>Xenopus</taxon>
    </lineage>
</organism>
<gene>
    <name type="primary">itpk1</name>
</gene>
<name>ITPK1_XENLA</name>
<reference key="1">
    <citation type="submission" date="2003-07" db="EMBL/GenBank/DDBJ databases">
        <authorList>
            <consortium name="NIH - Xenopus Gene Collection (XGC) project"/>
        </authorList>
    </citation>
    <scope>NUCLEOTIDE SEQUENCE [LARGE SCALE MRNA]</scope>
</reference>
<sequence length="396" mass="44218">MQTFLKGKRVGYWMSEKKIKKLNFQAFADLCRKRGIEVVQLNLAKPIEDQGPLDVIIHKLTDVILEADQKDSESMQLVQRFQDYIEAHPETIILDPLPAIRTLLDRSKSYELIRRIETYMQDERICSPPFMELMAECDEDTLKILEKNGLAFPLVCKTRVAHGTNSHEMAIIFNPEGLWSIKPPCVIQSFISHNAVLYKVFVVGESYTVVERPSLKNFSLGASDRASIFFNSHNVSKPESSSVLTALEKVEGVFERPCDEVIRGISKALRQALGISLFGIDIIINNKTGQHAVIDINAFPGYEGVPEFFTDLLNHITTILQRPDQSANKSSVEQTGSSLGERLCCTPPARTDPWIVETDTSGSVKLQSQRLGCNSSVSPSFQQHCVASLATKASSQ</sequence>
<protein>
    <recommendedName>
        <fullName>Inositol-tetrakisphosphate 1-kinase</fullName>
        <ecNumber evidence="2">2.7.1.134</ecNumber>
    </recommendedName>
    <alternativeName>
        <fullName>Inositol 1,3,4-trisphosphate 5/6-kinase</fullName>
        <shortName>Inositol-triphosphate 5/6-kinase</shortName>
        <shortName>Ins(1,3,4)P(3) 5/6-kinase</shortName>
        <ecNumber evidence="2">2.7.1.159</ecNumber>
    </alternativeName>
</protein>
<evidence type="ECO:0000250" key="1"/>
<evidence type="ECO:0000250" key="2">
    <source>
        <dbReference type="UniProtKB" id="Q13572"/>
    </source>
</evidence>
<evidence type="ECO:0000305" key="3"/>
<proteinExistence type="evidence at transcript level"/>
<accession>Q7SY78</accession>
<feature type="chain" id="PRO_0000220837" description="Inositol-tetrakisphosphate 1-kinase">
    <location>
        <begin position="1"/>
        <end position="396"/>
    </location>
</feature>
<feature type="domain" description="ATP-grasp">
    <location>
        <begin position="117"/>
        <end position="325"/>
    </location>
</feature>
<feature type="binding site" evidence="1">
    <location>
        <position position="18"/>
    </location>
    <ligand>
        <name>1D-myo-inositol 1,3,4-trisphosphate</name>
        <dbReference type="ChEBI" id="CHEBI:58414"/>
    </ligand>
</feature>
<feature type="binding site" evidence="1">
    <location>
        <position position="106"/>
    </location>
    <ligand>
        <name>ATP</name>
        <dbReference type="ChEBI" id="CHEBI:30616"/>
    </ligand>
</feature>
<feature type="binding site" evidence="1">
    <location>
        <position position="157"/>
    </location>
    <ligand>
        <name>ATP</name>
        <dbReference type="ChEBI" id="CHEBI:30616"/>
    </ligand>
</feature>
<feature type="binding site" evidence="1">
    <location>
        <position position="167"/>
    </location>
    <ligand>
        <name>1D-myo-inositol 1,3,4-trisphosphate</name>
        <dbReference type="ChEBI" id="CHEBI:58414"/>
    </ligand>
</feature>
<feature type="binding site" evidence="1">
    <location>
        <begin position="188"/>
        <end position="199"/>
    </location>
    <ligand>
        <name>ATP</name>
        <dbReference type="ChEBI" id="CHEBI:30616"/>
    </ligand>
</feature>
<feature type="binding site" evidence="1">
    <location>
        <position position="199"/>
    </location>
    <ligand>
        <name>1D-myo-inositol 1,3,4-trisphosphate</name>
        <dbReference type="ChEBI" id="CHEBI:58414"/>
    </ligand>
</feature>
<feature type="binding site" evidence="1">
    <location>
        <position position="214"/>
    </location>
    <ligand>
        <name>ATP</name>
        <dbReference type="ChEBI" id="CHEBI:30616"/>
    </ligand>
</feature>
<feature type="binding site" evidence="1">
    <location>
        <position position="232"/>
    </location>
    <ligand>
        <name>ATP</name>
        <dbReference type="ChEBI" id="CHEBI:30616"/>
    </ligand>
</feature>
<feature type="binding site" evidence="1">
    <location>
        <position position="236"/>
    </location>
    <ligand>
        <name>ATP</name>
        <dbReference type="ChEBI" id="CHEBI:30616"/>
    </ligand>
</feature>
<feature type="binding site" evidence="1">
    <location>
        <position position="281"/>
    </location>
    <ligand>
        <name>Mg(2+)</name>
        <dbReference type="ChEBI" id="CHEBI:18420"/>
        <label>1</label>
    </ligand>
</feature>
<feature type="binding site" evidence="1">
    <location>
        <position position="295"/>
    </location>
    <ligand>
        <name>Mg(2+)</name>
        <dbReference type="ChEBI" id="CHEBI:18420"/>
        <label>1</label>
    </ligand>
</feature>
<feature type="binding site" evidence="1">
    <location>
        <position position="295"/>
    </location>
    <ligand>
        <name>Mg(2+)</name>
        <dbReference type="ChEBI" id="CHEBI:18420"/>
        <label>2</label>
    </ligand>
</feature>
<feature type="binding site" evidence="1">
    <location>
        <position position="297"/>
    </location>
    <ligand>
        <name>1D-myo-inositol 1,3,4-trisphosphate</name>
        <dbReference type="ChEBI" id="CHEBI:58414"/>
    </ligand>
</feature>
<feature type="binding site" evidence="1">
    <location>
        <position position="297"/>
    </location>
    <ligand>
        <name>Mg(2+)</name>
        <dbReference type="ChEBI" id="CHEBI:18420"/>
        <label>2</label>
    </ligand>
</feature>